<reference key="1">
    <citation type="submission" date="2008-06" db="EMBL/GenBank/DDBJ databases">
        <title>Complete sequence of Chlorobaculum parvum NCIB 8327.</title>
        <authorList>
            <consortium name="US DOE Joint Genome Institute"/>
            <person name="Lucas S."/>
            <person name="Copeland A."/>
            <person name="Lapidus A."/>
            <person name="Glavina del Rio T."/>
            <person name="Dalin E."/>
            <person name="Tice H."/>
            <person name="Bruce D."/>
            <person name="Goodwin L."/>
            <person name="Pitluck S."/>
            <person name="Schmutz J."/>
            <person name="Larimer F."/>
            <person name="Land M."/>
            <person name="Hauser L."/>
            <person name="Kyrpides N."/>
            <person name="Mikhailova N."/>
            <person name="Zhao F."/>
            <person name="Li T."/>
            <person name="Liu Z."/>
            <person name="Overmann J."/>
            <person name="Bryant D.A."/>
            <person name="Richardson P."/>
        </authorList>
    </citation>
    <scope>NUCLEOTIDE SEQUENCE [LARGE SCALE GENOMIC DNA]</scope>
    <source>
        <strain>DSM 263 / NCIMB 8327</strain>
    </source>
</reference>
<sequence length="141" mass="14896">MAKKITGFIKLQIPAGGANPAPPVGPALGQKGVNIMEFCKQFNAKTQSEAGMIIPVVITVFSDKSFTFVTKTPPAAVLLLKEAKLQKGSGEPNRNKVGTVTMEQVRKIAELKKPDLNSVDIEGAAQMVMGTARSMGIVVEG</sequence>
<protein>
    <recommendedName>
        <fullName evidence="1">Large ribosomal subunit protein uL11</fullName>
    </recommendedName>
    <alternativeName>
        <fullName evidence="2">50S ribosomal protein L11</fullName>
    </alternativeName>
</protein>
<gene>
    <name evidence="1" type="primary">rplK</name>
    <name type="ordered locus">Cpar_1887</name>
</gene>
<feature type="chain" id="PRO_1000195594" description="Large ribosomal subunit protein uL11">
    <location>
        <begin position="1"/>
        <end position="141"/>
    </location>
</feature>
<evidence type="ECO:0000255" key="1">
    <source>
        <dbReference type="HAMAP-Rule" id="MF_00736"/>
    </source>
</evidence>
<evidence type="ECO:0000305" key="2"/>
<organism>
    <name type="scientific">Chlorobaculum parvum (strain DSM 263 / NCIMB 8327)</name>
    <name type="common">Chlorobium vibrioforme subsp. thiosulfatophilum</name>
    <dbReference type="NCBI Taxonomy" id="517417"/>
    <lineage>
        <taxon>Bacteria</taxon>
        <taxon>Pseudomonadati</taxon>
        <taxon>Chlorobiota</taxon>
        <taxon>Chlorobiia</taxon>
        <taxon>Chlorobiales</taxon>
        <taxon>Chlorobiaceae</taxon>
        <taxon>Chlorobaculum</taxon>
    </lineage>
</organism>
<name>RL11_CHLP8</name>
<proteinExistence type="inferred from homology"/>
<dbReference type="EMBL" id="CP001099">
    <property type="protein sequence ID" value="ACF12279.1"/>
    <property type="molecule type" value="Genomic_DNA"/>
</dbReference>
<dbReference type="RefSeq" id="WP_012503112.1">
    <property type="nucleotide sequence ID" value="NC_011027.1"/>
</dbReference>
<dbReference type="SMR" id="B3QQS6"/>
<dbReference type="STRING" id="517417.Cpar_1887"/>
<dbReference type="KEGG" id="cpc:Cpar_1887"/>
<dbReference type="eggNOG" id="COG0080">
    <property type="taxonomic scope" value="Bacteria"/>
</dbReference>
<dbReference type="HOGENOM" id="CLU_074237_2_1_10"/>
<dbReference type="OrthoDB" id="9802408at2"/>
<dbReference type="Proteomes" id="UP000008811">
    <property type="component" value="Chromosome"/>
</dbReference>
<dbReference type="GO" id="GO:0022625">
    <property type="term" value="C:cytosolic large ribosomal subunit"/>
    <property type="evidence" value="ECO:0007669"/>
    <property type="project" value="TreeGrafter"/>
</dbReference>
<dbReference type="GO" id="GO:0070180">
    <property type="term" value="F:large ribosomal subunit rRNA binding"/>
    <property type="evidence" value="ECO:0007669"/>
    <property type="project" value="UniProtKB-UniRule"/>
</dbReference>
<dbReference type="GO" id="GO:0003735">
    <property type="term" value="F:structural constituent of ribosome"/>
    <property type="evidence" value="ECO:0007669"/>
    <property type="project" value="InterPro"/>
</dbReference>
<dbReference type="GO" id="GO:0006412">
    <property type="term" value="P:translation"/>
    <property type="evidence" value="ECO:0007669"/>
    <property type="project" value="UniProtKB-UniRule"/>
</dbReference>
<dbReference type="CDD" id="cd00349">
    <property type="entry name" value="Ribosomal_L11"/>
    <property type="match status" value="1"/>
</dbReference>
<dbReference type="FunFam" id="1.10.10.250:FF:000001">
    <property type="entry name" value="50S ribosomal protein L11"/>
    <property type="match status" value="1"/>
</dbReference>
<dbReference type="FunFam" id="3.30.1550.10:FF:000001">
    <property type="entry name" value="50S ribosomal protein L11"/>
    <property type="match status" value="1"/>
</dbReference>
<dbReference type="Gene3D" id="1.10.10.250">
    <property type="entry name" value="Ribosomal protein L11, C-terminal domain"/>
    <property type="match status" value="1"/>
</dbReference>
<dbReference type="Gene3D" id="3.30.1550.10">
    <property type="entry name" value="Ribosomal protein L11/L12, N-terminal domain"/>
    <property type="match status" value="1"/>
</dbReference>
<dbReference type="HAMAP" id="MF_00736">
    <property type="entry name" value="Ribosomal_uL11"/>
    <property type="match status" value="1"/>
</dbReference>
<dbReference type="InterPro" id="IPR000911">
    <property type="entry name" value="Ribosomal_uL11"/>
</dbReference>
<dbReference type="InterPro" id="IPR006519">
    <property type="entry name" value="Ribosomal_uL11_bac-typ"/>
</dbReference>
<dbReference type="InterPro" id="IPR020783">
    <property type="entry name" value="Ribosomal_uL11_C"/>
</dbReference>
<dbReference type="InterPro" id="IPR036769">
    <property type="entry name" value="Ribosomal_uL11_C_sf"/>
</dbReference>
<dbReference type="InterPro" id="IPR020784">
    <property type="entry name" value="Ribosomal_uL11_N"/>
</dbReference>
<dbReference type="InterPro" id="IPR036796">
    <property type="entry name" value="Ribosomal_uL11_N_sf"/>
</dbReference>
<dbReference type="NCBIfam" id="TIGR01632">
    <property type="entry name" value="L11_bact"/>
    <property type="match status" value="1"/>
</dbReference>
<dbReference type="PANTHER" id="PTHR11661">
    <property type="entry name" value="60S RIBOSOMAL PROTEIN L12"/>
    <property type="match status" value="1"/>
</dbReference>
<dbReference type="PANTHER" id="PTHR11661:SF1">
    <property type="entry name" value="LARGE RIBOSOMAL SUBUNIT PROTEIN UL11M"/>
    <property type="match status" value="1"/>
</dbReference>
<dbReference type="Pfam" id="PF00298">
    <property type="entry name" value="Ribosomal_L11"/>
    <property type="match status" value="1"/>
</dbReference>
<dbReference type="Pfam" id="PF03946">
    <property type="entry name" value="Ribosomal_L11_N"/>
    <property type="match status" value="1"/>
</dbReference>
<dbReference type="SMART" id="SM00649">
    <property type="entry name" value="RL11"/>
    <property type="match status" value="1"/>
</dbReference>
<dbReference type="SUPFAM" id="SSF54747">
    <property type="entry name" value="Ribosomal L11/L12e N-terminal domain"/>
    <property type="match status" value="1"/>
</dbReference>
<dbReference type="SUPFAM" id="SSF46906">
    <property type="entry name" value="Ribosomal protein L11, C-terminal domain"/>
    <property type="match status" value="1"/>
</dbReference>
<accession>B3QQS6</accession>
<comment type="function">
    <text evidence="1">Forms part of the ribosomal stalk which helps the ribosome interact with GTP-bound translation factors.</text>
</comment>
<comment type="subunit">
    <text evidence="1">Part of the ribosomal stalk of the 50S ribosomal subunit. Interacts with L10 and the large rRNA to form the base of the stalk. L10 forms an elongated spine to which L12 dimers bind in a sequential fashion forming a multimeric L10(L12)X complex.</text>
</comment>
<comment type="PTM">
    <text evidence="1">One or more lysine residues are methylated.</text>
</comment>
<comment type="similarity">
    <text evidence="1">Belongs to the universal ribosomal protein uL11 family.</text>
</comment>
<keyword id="KW-0488">Methylation</keyword>
<keyword id="KW-0687">Ribonucleoprotein</keyword>
<keyword id="KW-0689">Ribosomal protein</keyword>
<keyword id="KW-0694">RNA-binding</keyword>
<keyword id="KW-0699">rRNA-binding</keyword>